<comment type="function">
    <text evidence="1">Binds to the 23S rRNA.</text>
</comment>
<comment type="cofactor">
    <cofactor evidence="1">
        <name>Zn(2+)</name>
        <dbReference type="ChEBI" id="CHEBI:29105"/>
    </cofactor>
    <text evidence="1">Binds 1 zinc ion per subunit.</text>
</comment>
<comment type="similarity">
    <text evidence="1">Belongs to the eukaryotic ribosomal protein eL37 family.</text>
</comment>
<name>RL37_METM5</name>
<reference key="1">
    <citation type="submission" date="2007-03" db="EMBL/GenBank/DDBJ databases">
        <title>Complete sequence of chromosome of Methanococcus maripaludis C5.</title>
        <authorList>
            <consortium name="US DOE Joint Genome Institute"/>
            <person name="Copeland A."/>
            <person name="Lucas S."/>
            <person name="Lapidus A."/>
            <person name="Barry K."/>
            <person name="Glavina del Rio T."/>
            <person name="Dalin E."/>
            <person name="Tice H."/>
            <person name="Pitluck S."/>
            <person name="Chertkov O."/>
            <person name="Brettin T."/>
            <person name="Bruce D."/>
            <person name="Han C."/>
            <person name="Detter J.C."/>
            <person name="Schmutz J."/>
            <person name="Larimer F."/>
            <person name="Land M."/>
            <person name="Hauser L."/>
            <person name="Kyrpides N."/>
            <person name="Mikhailova N."/>
            <person name="Sieprawska-Lupa M."/>
            <person name="Whitman W.B."/>
            <person name="Richardson P."/>
        </authorList>
    </citation>
    <scope>NUCLEOTIDE SEQUENCE [LARGE SCALE GENOMIC DNA]</scope>
    <source>
        <strain>C5 / ATCC BAA-1333</strain>
    </source>
</reference>
<organism>
    <name type="scientific">Methanococcus maripaludis (strain C5 / ATCC BAA-1333)</name>
    <dbReference type="NCBI Taxonomy" id="402880"/>
    <lineage>
        <taxon>Archaea</taxon>
        <taxon>Methanobacteriati</taxon>
        <taxon>Methanobacteriota</taxon>
        <taxon>Methanomada group</taxon>
        <taxon>Methanococci</taxon>
        <taxon>Methanococcales</taxon>
        <taxon>Methanococcaceae</taxon>
        <taxon>Methanococcus</taxon>
    </lineage>
</organism>
<proteinExistence type="inferred from homology"/>
<feature type="chain" id="PRO_1000017764" description="Large ribosomal subunit protein eL37">
    <location>
        <begin position="1"/>
        <end position="64"/>
    </location>
</feature>
<feature type="zinc finger region" description="C4-type" evidence="1">
    <location>
        <begin position="20"/>
        <end position="38"/>
    </location>
</feature>
<feature type="binding site" evidence="1">
    <location>
        <position position="20"/>
    </location>
    <ligand>
        <name>Zn(2+)</name>
        <dbReference type="ChEBI" id="CHEBI:29105"/>
    </ligand>
</feature>
<feature type="binding site" evidence="1">
    <location>
        <position position="23"/>
    </location>
    <ligand>
        <name>Zn(2+)</name>
        <dbReference type="ChEBI" id="CHEBI:29105"/>
    </ligand>
</feature>
<feature type="binding site" evidence="1">
    <location>
        <position position="35"/>
    </location>
    <ligand>
        <name>Zn(2+)</name>
        <dbReference type="ChEBI" id="CHEBI:29105"/>
    </ligand>
</feature>
<feature type="binding site" evidence="1">
    <location>
        <position position="38"/>
    </location>
    <ligand>
        <name>Zn(2+)</name>
        <dbReference type="ChEBI" id="CHEBI:29105"/>
    </ligand>
</feature>
<gene>
    <name evidence="1" type="primary">rpl37e</name>
    <name type="ordered locus">MmarC5_0438</name>
</gene>
<evidence type="ECO:0000255" key="1">
    <source>
        <dbReference type="HAMAP-Rule" id="MF_00547"/>
    </source>
</evidence>
<evidence type="ECO:0000305" key="2"/>
<accession>A4FX24</accession>
<sequence length="64" mass="7245">MTKGTPSQGKHNKGSNHIVCRRCGRRSFHVRKKVCAACGFGKSSKIKRFAWQWKKVTGKGNRVK</sequence>
<protein>
    <recommendedName>
        <fullName evidence="1">Large ribosomal subunit protein eL37</fullName>
    </recommendedName>
    <alternativeName>
        <fullName evidence="2">50S ribosomal protein L37e</fullName>
    </alternativeName>
</protein>
<keyword id="KW-0479">Metal-binding</keyword>
<keyword id="KW-0687">Ribonucleoprotein</keyword>
<keyword id="KW-0689">Ribosomal protein</keyword>
<keyword id="KW-0694">RNA-binding</keyword>
<keyword id="KW-0699">rRNA-binding</keyword>
<keyword id="KW-0862">Zinc</keyword>
<keyword id="KW-0863">Zinc-finger</keyword>
<dbReference type="EMBL" id="CP000609">
    <property type="protein sequence ID" value="ABO34753.1"/>
    <property type="molecule type" value="Genomic_DNA"/>
</dbReference>
<dbReference type="RefSeq" id="WP_011868208.1">
    <property type="nucleotide sequence ID" value="NC_009135.1"/>
</dbReference>
<dbReference type="SMR" id="A4FX24"/>
<dbReference type="STRING" id="402880.MmarC5_0438"/>
<dbReference type="GeneID" id="4927843"/>
<dbReference type="KEGG" id="mmq:MmarC5_0438"/>
<dbReference type="eggNOG" id="arCOG04126">
    <property type="taxonomic scope" value="Archaea"/>
</dbReference>
<dbReference type="HOGENOM" id="CLU_208825_0_0_2"/>
<dbReference type="OrthoDB" id="5619at2157"/>
<dbReference type="Proteomes" id="UP000000253">
    <property type="component" value="Chromosome"/>
</dbReference>
<dbReference type="GO" id="GO:1990904">
    <property type="term" value="C:ribonucleoprotein complex"/>
    <property type="evidence" value="ECO:0007669"/>
    <property type="project" value="UniProtKB-KW"/>
</dbReference>
<dbReference type="GO" id="GO:0005840">
    <property type="term" value="C:ribosome"/>
    <property type="evidence" value="ECO:0007669"/>
    <property type="project" value="UniProtKB-KW"/>
</dbReference>
<dbReference type="GO" id="GO:0019843">
    <property type="term" value="F:rRNA binding"/>
    <property type="evidence" value="ECO:0007669"/>
    <property type="project" value="UniProtKB-KW"/>
</dbReference>
<dbReference type="GO" id="GO:0003735">
    <property type="term" value="F:structural constituent of ribosome"/>
    <property type="evidence" value="ECO:0007669"/>
    <property type="project" value="InterPro"/>
</dbReference>
<dbReference type="GO" id="GO:0008270">
    <property type="term" value="F:zinc ion binding"/>
    <property type="evidence" value="ECO:0007669"/>
    <property type="project" value="UniProtKB-UniRule"/>
</dbReference>
<dbReference type="GO" id="GO:0006412">
    <property type="term" value="P:translation"/>
    <property type="evidence" value="ECO:0007669"/>
    <property type="project" value="UniProtKB-UniRule"/>
</dbReference>
<dbReference type="FunFam" id="2.20.25.30:FF:000003">
    <property type="entry name" value="50S ribosomal protein L37e"/>
    <property type="match status" value="1"/>
</dbReference>
<dbReference type="Gene3D" id="2.20.25.30">
    <property type="match status" value="1"/>
</dbReference>
<dbReference type="HAMAP" id="MF_00547">
    <property type="entry name" value="Ribosomal_eL37"/>
    <property type="match status" value="1"/>
</dbReference>
<dbReference type="InterPro" id="IPR001569">
    <property type="entry name" value="Ribosomal_eL37"/>
</dbReference>
<dbReference type="InterPro" id="IPR011331">
    <property type="entry name" value="Ribosomal_eL37/eL43"/>
</dbReference>
<dbReference type="InterPro" id="IPR018267">
    <property type="entry name" value="Ribosomal_eL37_CS"/>
</dbReference>
<dbReference type="InterPro" id="IPR011332">
    <property type="entry name" value="Ribosomal_zn-bd"/>
</dbReference>
<dbReference type="NCBIfam" id="NF003214">
    <property type="entry name" value="PRK04179.1"/>
    <property type="match status" value="1"/>
</dbReference>
<dbReference type="Pfam" id="PF01907">
    <property type="entry name" value="Ribosomal_L37e"/>
    <property type="match status" value="1"/>
</dbReference>
<dbReference type="SUPFAM" id="SSF57829">
    <property type="entry name" value="Zn-binding ribosomal proteins"/>
    <property type="match status" value="1"/>
</dbReference>
<dbReference type="PROSITE" id="PS01077">
    <property type="entry name" value="RIBOSOMAL_L37E"/>
    <property type="match status" value="1"/>
</dbReference>